<dbReference type="EMBL" id="CP000686">
    <property type="protein sequence ID" value="ABQ89580.1"/>
    <property type="molecule type" value="Genomic_DNA"/>
</dbReference>
<dbReference type="RefSeq" id="WP_011955933.1">
    <property type="nucleotide sequence ID" value="NC_009523.1"/>
</dbReference>
<dbReference type="SMR" id="A5USH7"/>
<dbReference type="STRING" id="357808.RoseRS_1173"/>
<dbReference type="KEGG" id="rrs:RoseRS_1173"/>
<dbReference type="eggNOG" id="COG0094">
    <property type="taxonomic scope" value="Bacteria"/>
</dbReference>
<dbReference type="HOGENOM" id="CLU_061015_2_1_0"/>
<dbReference type="OrthoDB" id="9806626at2"/>
<dbReference type="Proteomes" id="UP000006554">
    <property type="component" value="Chromosome"/>
</dbReference>
<dbReference type="GO" id="GO:1990904">
    <property type="term" value="C:ribonucleoprotein complex"/>
    <property type="evidence" value="ECO:0007669"/>
    <property type="project" value="UniProtKB-KW"/>
</dbReference>
<dbReference type="GO" id="GO:0005840">
    <property type="term" value="C:ribosome"/>
    <property type="evidence" value="ECO:0007669"/>
    <property type="project" value="UniProtKB-KW"/>
</dbReference>
<dbReference type="GO" id="GO:0019843">
    <property type="term" value="F:rRNA binding"/>
    <property type="evidence" value="ECO:0007669"/>
    <property type="project" value="UniProtKB-UniRule"/>
</dbReference>
<dbReference type="GO" id="GO:0003735">
    <property type="term" value="F:structural constituent of ribosome"/>
    <property type="evidence" value="ECO:0007669"/>
    <property type="project" value="InterPro"/>
</dbReference>
<dbReference type="GO" id="GO:0000049">
    <property type="term" value="F:tRNA binding"/>
    <property type="evidence" value="ECO:0007669"/>
    <property type="project" value="UniProtKB-UniRule"/>
</dbReference>
<dbReference type="GO" id="GO:0006412">
    <property type="term" value="P:translation"/>
    <property type="evidence" value="ECO:0007669"/>
    <property type="project" value="UniProtKB-UniRule"/>
</dbReference>
<dbReference type="FunFam" id="3.30.1440.10:FF:000001">
    <property type="entry name" value="50S ribosomal protein L5"/>
    <property type="match status" value="1"/>
</dbReference>
<dbReference type="Gene3D" id="3.30.1440.10">
    <property type="match status" value="1"/>
</dbReference>
<dbReference type="HAMAP" id="MF_01333_B">
    <property type="entry name" value="Ribosomal_uL5_B"/>
    <property type="match status" value="1"/>
</dbReference>
<dbReference type="InterPro" id="IPR002132">
    <property type="entry name" value="Ribosomal_uL5"/>
</dbReference>
<dbReference type="InterPro" id="IPR020930">
    <property type="entry name" value="Ribosomal_uL5_bac-type"/>
</dbReference>
<dbReference type="InterPro" id="IPR031309">
    <property type="entry name" value="Ribosomal_uL5_C"/>
</dbReference>
<dbReference type="InterPro" id="IPR020929">
    <property type="entry name" value="Ribosomal_uL5_CS"/>
</dbReference>
<dbReference type="InterPro" id="IPR022803">
    <property type="entry name" value="Ribosomal_uL5_dom_sf"/>
</dbReference>
<dbReference type="InterPro" id="IPR031310">
    <property type="entry name" value="Ribosomal_uL5_N"/>
</dbReference>
<dbReference type="NCBIfam" id="NF000585">
    <property type="entry name" value="PRK00010.1"/>
    <property type="match status" value="1"/>
</dbReference>
<dbReference type="PANTHER" id="PTHR11994">
    <property type="entry name" value="60S RIBOSOMAL PROTEIN L11-RELATED"/>
    <property type="match status" value="1"/>
</dbReference>
<dbReference type="Pfam" id="PF00281">
    <property type="entry name" value="Ribosomal_L5"/>
    <property type="match status" value="1"/>
</dbReference>
<dbReference type="Pfam" id="PF00673">
    <property type="entry name" value="Ribosomal_L5_C"/>
    <property type="match status" value="1"/>
</dbReference>
<dbReference type="PIRSF" id="PIRSF002161">
    <property type="entry name" value="Ribosomal_L5"/>
    <property type="match status" value="1"/>
</dbReference>
<dbReference type="SUPFAM" id="SSF55282">
    <property type="entry name" value="RL5-like"/>
    <property type="match status" value="1"/>
</dbReference>
<dbReference type="PROSITE" id="PS00358">
    <property type="entry name" value="RIBOSOMAL_L5"/>
    <property type="match status" value="1"/>
</dbReference>
<feature type="chain" id="PRO_1000142441" description="Large ribosomal subunit protein uL5">
    <location>
        <begin position="1"/>
        <end position="180"/>
    </location>
</feature>
<protein>
    <recommendedName>
        <fullName evidence="1">Large ribosomal subunit protein uL5</fullName>
    </recommendedName>
    <alternativeName>
        <fullName evidence="2">50S ribosomal protein L5</fullName>
    </alternativeName>
</protein>
<comment type="function">
    <text evidence="1">This is one of the proteins that bind and probably mediate the attachment of the 5S RNA into the large ribosomal subunit, where it forms part of the central protuberance. In the 70S ribosome it contacts protein S13 of the 30S subunit (bridge B1b), connecting the 2 subunits; this bridge is implicated in subunit movement. Contacts the P site tRNA; the 5S rRNA and some of its associated proteins might help stabilize positioning of ribosome-bound tRNAs.</text>
</comment>
<comment type="subunit">
    <text evidence="1">Part of the 50S ribosomal subunit; part of the 5S rRNA/L5/L18/L25 subcomplex. Contacts the 5S rRNA and the P site tRNA. Forms a bridge to the 30S subunit in the 70S ribosome.</text>
</comment>
<comment type="similarity">
    <text evidence="1">Belongs to the universal ribosomal protein uL5 family.</text>
</comment>
<evidence type="ECO:0000255" key="1">
    <source>
        <dbReference type="HAMAP-Rule" id="MF_01333"/>
    </source>
</evidence>
<evidence type="ECO:0000305" key="2"/>
<keyword id="KW-0687">Ribonucleoprotein</keyword>
<keyword id="KW-0689">Ribosomal protein</keyword>
<keyword id="KW-0694">RNA-binding</keyword>
<keyword id="KW-0699">rRNA-binding</keyword>
<keyword id="KW-0820">tRNA-binding</keyword>
<sequence length="180" mass="20419">MVPRLKEKYQTEVVPALMQEFRYRSVMQVPRIEKIVLNIGLGEAIQNSKALDAATADLAAIAGQKPVITRARKSIAAFKVRQGMPIGVMVTLRGPRMWSFLDRLMNLVLPRLRDFRGVSRRSFDGRGNYSIGLREQIVFPEIDYDKVDKLRGLEVVIVTTAPDDEQGYALLKRLGMPFRD</sequence>
<reference key="1">
    <citation type="submission" date="2007-04" db="EMBL/GenBank/DDBJ databases">
        <title>Complete sequence of Roseiflexus sp. RS-1.</title>
        <authorList>
            <consortium name="US DOE Joint Genome Institute"/>
            <person name="Copeland A."/>
            <person name="Lucas S."/>
            <person name="Lapidus A."/>
            <person name="Barry K."/>
            <person name="Detter J.C."/>
            <person name="Glavina del Rio T."/>
            <person name="Hammon N."/>
            <person name="Israni S."/>
            <person name="Dalin E."/>
            <person name="Tice H."/>
            <person name="Pitluck S."/>
            <person name="Chertkov O."/>
            <person name="Brettin T."/>
            <person name="Bruce D."/>
            <person name="Han C."/>
            <person name="Schmutz J."/>
            <person name="Larimer F."/>
            <person name="Land M."/>
            <person name="Hauser L."/>
            <person name="Kyrpides N."/>
            <person name="Mikhailova N."/>
            <person name="Bryant D.A."/>
            <person name="Richardson P."/>
        </authorList>
    </citation>
    <scope>NUCLEOTIDE SEQUENCE [LARGE SCALE GENOMIC DNA]</scope>
    <source>
        <strain>RS-1</strain>
    </source>
</reference>
<accession>A5USH7</accession>
<proteinExistence type="inferred from homology"/>
<organism>
    <name type="scientific">Roseiflexus sp. (strain RS-1)</name>
    <dbReference type="NCBI Taxonomy" id="357808"/>
    <lineage>
        <taxon>Bacteria</taxon>
        <taxon>Bacillati</taxon>
        <taxon>Chloroflexota</taxon>
        <taxon>Chloroflexia</taxon>
        <taxon>Chloroflexales</taxon>
        <taxon>Roseiflexineae</taxon>
        <taxon>Roseiflexaceae</taxon>
        <taxon>Roseiflexus</taxon>
    </lineage>
</organism>
<gene>
    <name evidence="1" type="primary">rplE</name>
    <name type="ordered locus">RoseRS_1173</name>
</gene>
<name>RL5_ROSS1</name>